<gene>
    <name type="primary">AIM25</name>
    <name type="ordered locus">YJR100C</name>
    <name type="ORF">J1946</name>
</gene>
<feature type="chain" id="PRO_0000203109" description="Altered inheritance rate of mitochondria protein 25">
    <location>
        <begin position="1"/>
        <end position="327"/>
    </location>
</feature>
<keyword id="KW-0496">Mitochondrion</keyword>
<keyword id="KW-1185">Reference proteome</keyword>
<dbReference type="EMBL" id="Z49600">
    <property type="protein sequence ID" value="CAA89630.1"/>
    <property type="molecule type" value="Genomic_DNA"/>
</dbReference>
<dbReference type="EMBL" id="BK006943">
    <property type="protein sequence ID" value="DAA08885.1"/>
    <property type="molecule type" value="Genomic_DNA"/>
</dbReference>
<dbReference type="PIR" id="S57121">
    <property type="entry name" value="S57121"/>
</dbReference>
<dbReference type="RefSeq" id="NP_012634.3">
    <property type="nucleotide sequence ID" value="NM_001181758.3"/>
</dbReference>
<dbReference type="BioGRID" id="33855">
    <property type="interactions" value="87"/>
</dbReference>
<dbReference type="DIP" id="DIP-4704N"/>
<dbReference type="FunCoup" id="P47140">
    <property type="interactions" value="255"/>
</dbReference>
<dbReference type="IntAct" id="P47140">
    <property type="interactions" value="2"/>
</dbReference>
<dbReference type="STRING" id="4932.YJR100C"/>
<dbReference type="TCDB" id="9.A.36.1.2">
    <property type="family name" value="the ca(2+)-dependent phospholipid scramblase (scramblase) family"/>
</dbReference>
<dbReference type="iPTMnet" id="P47140"/>
<dbReference type="PaxDb" id="4932-YJR100C"/>
<dbReference type="PeptideAtlas" id="P47140"/>
<dbReference type="EnsemblFungi" id="YJR100C_mRNA">
    <property type="protein sequence ID" value="YJR100C"/>
    <property type="gene ID" value="YJR100C"/>
</dbReference>
<dbReference type="GeneID" id="853563"/>
<dbReference type="KEGG" id="sce:YJR100C"/>
<dbReference type="AGR" id="SGD:S000003861"/>
<dbReference type="SGD" id="S000003861">
    <property type="gene designation" value="AIM25"/>
</dbReference>
<dbReference type="VEuPathDB" id="FungiDB:YJR100C"/>
<dbReference type="eggNOG" id="KOG0621">
    <property type="taxonomic scope" value="Eukaryota"/>
</dbReference>
<dbReference type="GeneTree" id="ENSGT00940000166503"/>
<dbReference type="HOGENOM" id="CLU_023808_0_1_1"/>
<dbReference type="InParanoid" id="P47140"/>
<dbReference type="OMA" id="QNWHLWR"/>
<dbReference type="OrthoDB" id="191150at2759"/>
<dbReference type="BioCyc" id="YEAST:G3O-31728-MONOMER"/>
<dbReference type="BioGRID-ORCS" id="853563">
    <property type="hits" value="0 hits in 10 CRISPR screens"/>
</dbReference>
<dbReference type="PRO" id="PR:P47140"/>
<dbReference type="Proteomes" id="UP000002311">
    <property type="component" value="Chromosome X"/>
</dbReference>
<dbReference type="RNAct" id="P47140">
    <property type="molecule type" value="protein"/>
</dbReference>
<dbReference type="GO" id="GO:0005739">
    <property type="term" value="C:mitochondrion"/>
    <property type="evidence" value="ECO:0007005"/>
    <property type="project" value="SGD"/>
</dbReference>
<dbReference type="GO" id="GO:0005886">
    <property type="term" value="C:plasma membrane"/>
    <property type="evidence" value="ECO:0000318"/>
    <property type="project" value="GO_Central"/>
</dbReference>
<dbReference type="GO" id="GO:0017128">
    <property type="term" value="F:phospholipid scramblase activity"/>
    <property type="evidence" value="ECO:0000318"/>
    <property type="project" value="GO_Central"/>
</dbReference>
<dbReference type="GO" id="GO:0034605">
    <property type="term" value="P:cellular response to heat"/>
    <property type="evidence" value="ECO:0000316"/>
    <property type="project" value="SGD"/>
</dbReference>
<dbReference type="GO" id="GO:0034599">
    <property type="term" value="P:cellular response to oxidative stress"/>
    <property type="evidence" value="ECO:0000315"/>
    <property type="project" value="SGD"/>
</dbReference>
<dbReference type="GO" id="GO:1903147">
    <property type="term" value="P:negative regulation of autophagy of mitochondrion"/>
    <property type="evidence" value="ECO:0000315"/>
    <property type="project" value="SGD"/>
</dbReference>
<dbReference type="GO" id="GO:0017121">
    <property type="term" value="P:plasma membrane phospholipid scrambling"/>
    <property type="evidence" value="ECO:0000318"/>
    <property type="project" value="GO_Central"/>
</dbReference>
<dbReference type="InterPro" id="IPR005552">
    <property type="entry name" value="Scramblase"/>
</dbReference>
<dbReference type="PANTHER" id="PTHR23248:SF9">
    <property type="entry name" value="PHOSPHOLIPID SCRAMBLASE"/>
    <property type="match status" value="1"/>
</dbReference>
<dbReference type="PANTHER" id="PTHR23248">
    <property type="entry name" value="PHOSPHOLIPID SCRAMBLASE-RELATED"/>
    <property type="match status" value="1"/>
</dbReference>
<dbReference type="Pfam" id="PF03803">
    <property type="entry name" value="Scramblase"/>
    <property type="match status" value="1"/>
</dbReference>
<reference key="1">
    <citation type="journal article" date="1996" name="EMBO J.">
        <title>Complete nucleotide sequence of Saccharomyces cerevisiae chromosome X.</title>
        <authorList>
            <person name="Galibert F."/>
            <person name="Alexandraki D."/>
            <person name="Baur A."/>
            <person name="Boles E."/>
            <person name="Chalwatzis N."/>
            <person name="Chuat J.-C."/>
            <person name="Coster F."/>
            <person name="Cziepluch C."/>
            <person name="de Haan M."/>
            <person name="Domdey H."/>
            <person name="Durand P."/>
            <person name="Entian K.-D."/>
            <person name="Gatius M."/>
            <person name="Goffeau A."/>
            <person name="Grivell L.A."/>
            <person name="Hennemann A."/>
            <person name="Herbert C.J."/>
            <person name="Heumann K."/>
            <person name="Hilger F."/>
            <person name="Hollenberg C.P."/>
            <person name="Huang M.-E."/>
            <person name="Jacq C."/>
            <person name="Jauniaux J.-C."/>
            <person name="Katsoulou C."/>
            <person name="Kirchrath L."/>
            <person name="Kleine K."/>
            <person name="Kordes E."/>
            <person name="Koetter P."/>
            <person name="Liebl S."/>
            <person name="Louis E.J."/>
            <person name="Manus V."/>
            <person name="Mewes H.-W."/>
            <person name="Miosga T."/>
            <person name="Obermaier B."/>
            <person name="Perea J."/>
            <person name="Pohl T.M."/>
            <person name="Portetelle D."/>
            <person name="Pujol A."/>
            <person name="Purnelle B."/>
            <person name="Ramezani Rad M."/>
            <person name="Rasmussen S.W."/>
            <person name="Rose M."/>
            <person name="Rossau R."/>
            <person name="Schaaff-Gerstenschlaeger I."/>
            <person name="Smits P.H.M."/>
            <person name="Scarcez T."/>
            <person name="Soriano N."/>
            <person name="To Van D."/>
            <person name="Tzermia M."/>
            <person name="Van Broekhoven A."/>
            <person name="Vandenbol M."/>
            <person name="Wedler H."/>
            <person name="von Wettstein D."/>
            <person name="Wambutt R."/>
            <person name="Zagulski M."/>
            <person name="Zollner A."/>
            <person name="Karpfinger-Hartl L."/>
        </authorList>
    </citation>
    <scope>NUCLEOTIDE SEQUENCE [LARGE SCALE GENOMIC DNA]</scope>
    <source>
        <strain>ATCC 204508 / S288c</strain>
    </source>
</reference>
<reference key="2">
    <citation type="journal article" date="2014" name="G3 (Bethesda)">
        <title>The reference genome sequence of Saccharomyces cerevisiae: Then and now.</title>
        <authorList>
            <person name="Engel S.R."/>
            <person name="Dietrich F.S."/>
            <person name="Fisk D.G."/>
            <person name="Binkley G."/>
            <person name="Balakrishnan R."/>
            <person name="Costanzo M.C."/>
            <person name="Dwight S.S."/>
            <person name="Hitz B.C."/>
            <person name="Karra K."/>
            <person name="Nash R.S."/>
            <person name="Weng S."/>
            <person name="Wong E.D."/>
            <person name="Lloyd P."/>
            <person name="Skrzypek M.S."/>
            <person name="Miyasato S.R."/>
            <person name="Simison M."/>
            <person name="Cherry J.M."/>
        </authorList>
    </citation>
    <scope>GENOME REANNOTATION</scope>
    <source>
        <strain>ATCC 204508 / S288c</strain>
    </source>
</reference>
<reference key="3">
    <citation type="journal article" date="2003" name="Mol. Cell">
        <title>Assigning function to yeast proteins by integration of technologies.</title>
        <authorList>
            <person name="Hazbun T.R."/>
            <person name="Malmstroem L."/>
            <person name="Anderson S."/>
            <person name="Graczyk B.J."/>
            <person name="Fox B."/>
            <person name="Riffle M."/>
            <person name="Sundin B.A."/>
            <person name="Aranda J.D."/>
            <person name="McDonald W.H."/>
            <person name="Chiu C.-H."/>
            <person name="Snydsman B.E."/>
            <person name="Bradley P."/>
            <person name="Muller E.G.D."/>
            <person name="Fields S."/>
            <person name="Baker D."/>
            <person name="Yates J.R. III"/>
            <person name="Davis T.N."/>
        </authorList>
    </citation>
    <scope>IDENTIFICATION BY MASS SPECTROMETRY</scope>
</reference>
<reference key="4">
    <citation type="journal article" date="2006" name="J. Proteome Res.">
        <title>Toward the complete yeast mitochondrial proteome: multidimensional separation techniques for mitochondrial proteomics.</title>
        <authorList>
            <person name="Reinders J."/>
            <person name="Zahedi R.P."/>
            <person name="Pfanner N."/>
            <person name="Meisinger C."/>
            <person name="Sickmann A."/>
        </authorList>
    </citation>
    <scope>SUBCELLULAR LOCATION [LARGE SCALE ANALYSIS]</scope>
    <scope>IDENTIFICATION BY MASS SPECTROMETRY</scope>
</reference>
<accession>P47140</accession>
<accession>D6VWR9</accession>
<name>AIM25_YEAST</name>
<sequence length="327" mass="37480">MHRTAIFLTYRSCMRNFSTLSKTLTVSSGKVIRNGPFRRVIREKNQITKAPSVKAFKENSNSGIIKVHDPIATTILNEPTVIIERQIEFMNVFLGFEQANRYAIMDVNGNKIASMMERDFSITKAIMRQFYRLHRPFLVDVFDNWGNVIMTIKRPFSFINSHIKTIIPPSAYVDNGSDSTHYHDGKEGTTVGETIQNWHLWRRRYELFQKDGVEGSTFDQFGKIDAPFLSFDFPVTDADGKIMASVDRNWVGLGREMFTDTGVYVVRFDSQRCFDNIYPTEMLSSQVLTLDQRAVLLANAVSIDFDYFSRHSRQTGGFLSFGGGYDE</sequence>
<protein>
    <recommendedName>
        <fullName>Altered inheritance rate of mitochondria protein 25</fullName>
    </recommendedName>
</protein>
<organism>
    <name type="scientific">Saccharomyces cerevisiae (strain ATCC 204508 / S288c)</name>
    <name type="common">Baker's yeast</name>
    <dbReference type="NCBI Taxonomy" id="559292"/>
    <lineage>
        <taxon>Eukaryota</taxon>
        <taxon>Fungi</taxon>
        <taxon>Dikarya</taxon>
        <taxon>Ascomycota</taxon>
        <taxon>Saccharomycotina</taxon>
        <taxon>Saccharomycetes</taxon>
        <taxon>Saccharomycetales</taxon>
        <taxon>Saccharomycetaceae</taxon>
        <taxon>Saccharomyces</taxon>
    </lineage>
</organism>
<evidence type="ECO:0000269" key="1">
    <source>
    </source>
</evidence>
<evidence type="ECO:0000305" key="2"/>
<proteinExistence type="evidence at protein level"/>
<comment type="subcellular location">
    <subcellularLocation>
        <location evidence="1">Mitochondrion</location>
    </subcellularLocation>
</comment>
<comment type="similarity">
    <text evidence="2">Belongs to the phospholipid scramblase family.</text>
</comment>